<proteinExistence type="evidence at transcript level"/>
<sequence length="104" mass="11191">MRSLLCAPLLLLLLSAGESAVITGACDKDLQCGEGMCCAVSLWIRSIRICTPLGSSGEDCHPLSHKVPFDGQRKHHTCPCLPNLVCGQTSPGKHKCLPEFKNVF</sequence>
<reference key="1">
    <citation type="journal article" date="2006" name="Nature">
        <title>Early evolution of the venom system in lizards and snakes.</title>
        <authorList>
            <person name="Fry B.G."/>
            <person name="Vidal N."/>
            <person name="Norman J.A."/>
            <person name="Vonk F.J."/>
            <person name="Scheib H."/>
            <person name="Ramjan S.F.R."/>
            <person name="Kuruppu S."/>
            <person name="Fung K."/>
            <person name="Blair Hedges S."/>
            <person name="Richardson M.K."/>
            <person name="Hodgson W.C."/>
            <person name="Ignjatovic V."/>
            <person name="Summerhayes R."/>
            <person name="Kochva E."/>
        </authorList>
    </citation>
    <scope>NUCLEOTIDE SEQUENCE [LARGE SCALE MRNA]</scope>
    <source>
        <tissue>Venom gland</tissue>
    </source>
</reference>
<protein>
    <recommendedName>
        <fullName evidence="4">AVIToxin-VAR2</fullName>
    </recommendedName>
</protein>
<dbReference type="EMBL" id="DQ139878">
    <property type="protein sequence ID" value="AAZ75584.1"/>
    <property type="molecule type" value="mRNA"/>
</dbReference>
<dbReference type="SMR" id="Q2XXR7"/>
<dbReference type="GO" id="GO:0005576">
    <property type="term" value="C:extracellular region"/>
    <property type="evidence" value="ECO:0007669"/>
    <property type="project" value="UniProtKB-SubCell"/>
</dbReference>
<dbReference type="GO" id="GO:0090729">
    <property type="term" value="F:toxin activity"/>
    <property type="evidence" value="ECO:0007669"/>
    <property type="project" value="UniProtKB-KW"/>
</dbReference>
<dbReference type="GO" id="GO:0001935">
    <property type="term" value="P:endothelial cell proliferation"/>
    <property type="evidence" value="ECO:0007669"/>
    <property type="project" value="TreeGrafter"/>
</dbReference>
<dbReference type="Gene3D" id="2.10.80.10">
    <property type="entry name" value="Lipase, subunit A"/>
    <property type="match status" value="1"/>
</dbReference>
<dbReference type="InterPro" id="IPR009523">
    <property type="entry name" value="Prokineticin"/>
</dbReference>
<dbReference type="InterPro" id="IPR023569">
    <property type="entry name" value="Prokineticin_domain"/>
</dbReference>
<dbReference type="PANTHER" id="PTHR18821">
    <property type="entry name" value="PROKINETICIN"/>
    <property type="match status" value="1"/>
</dbReference>
<dbReference type="PANTHER" id="PTHR18821:SF8">
    <property type="entry name" value="PROKINETICIN-2"/>
    <property type="match status" value="1"/>
</dbReference>
<dbReference type="Pfam" id="PF06607">
    <property type="entry name" value="Prokineticin"/>
    <property type="match status" value="1"/>
</dbReference>
<dbReference type="SUPFAM" id="SSF57190">
    <property type="entry name" value="Colipase-like"/>
    <property type="match status" value="2"/>
</dbReference>
<evidence type="ECO:0000250" key="1"/>
<evidence type="ECO:0000250" key="2">
    <source>
        <dbReference type="UniProtKB" id="P25687"/>
    </source>
</evidence>
<evidence type="ECO:0000305" key="3"/>
<evidence type="ECO:0000312" key="4">
    <source>
        <dbReference type="EMBL" id="AAZ75584.1"/>
    </source>
</evidence>
<feature type="signal peptide" evidence="1">
    <location>
        <begin position="1"/>
        <end position="19"/>
    </location>
</feature>
<feature type="chain" id="PRO_0000267483" description="AVIToxin-VAR2">
    <location>
        <begin position="20"/>
        <end position="104"/>
    </location>
</feature>
<feature type="disulfide bond" evidence="2">
    <location>
        <begin position="26"/>
        <end position="38"/>
    </location>
</feature>
<feature type="disulfide bond" evidence="2">
    <location>
        <begin position="32"/>
        <end position="50"/>
    </location>
</feature>
<feature type="disulfide bond" evidence="2">
    <location>
        <begin position="37"/>
        <end position="78"/>
    </location>
</feature>
<feature type="disulfide bond" evidence="2">
    <location>
        <begin position="60"/>
        <end position="86"/>
    </location>
</feature>
<feature type="disulfide bond" evidence="2">
    <location>
        <begin position="80"/>
        <end position="96"/>
    </location>
</feature>
<comment type="function">
    <text evidence="2">Potent agonist for both PKR1/PROKR1 and PKR2/PROKR2. Potently contracts gastrointestinal (GI) smooth muscle.</text>
</comment>
<comment type="subcellular location">
    <subcellularLocation>
        <location evidence="1">Secreted</location>
    </subcellularLocation>
</comment>
<comment type="tissue specificity">
    <text>Expressed by the venom gland.</text>
</comment>
<comment type="similarity">
    <text evidence="3">Belongs to the AVIT (prokineticin) family.</text>
</comment>
<accession>Q2XXR7</accession>
<organism>
    <name type="scientific">Varanus varius</name>
    <name type="common">Lace monitor lizard</name>
    <name type="synonym">Lacerta varia</name>
    <dbReference type="NCBI Taxonomy" id="8559"/>
    <lineage>
        <taxon>Eukaryota</taxon>
        <taxon>Metazoa</taxon>
        <taxon>Chordata</taxon>
        <taxon>Craniata</taxon>
        <taxon>Vertebrata</taxon>
        <taxon>Euteleostomi</taxon>
        <taxon>Lepidosauria</taxon>
        <taxon>Squamata</taxon>
        <taxon>Bifurcata</taxon>
        <taxon>Unidentata</taxon>
        <taxon>Episquamata</taxon>
        <taxon>Toxicofera</taxon>
        <taxon>Anguimorpha</taxon>
        <taxon>Paleoanguimorpha</taxon>
        <taxon>Varanoidea</taxon>
        <taxon>Varanidae</taxon>
        <taxon>Varanus</taxon>
    </lineage>
</organism>
<keyword id="KW-1015">Disulfide bond</keyword>
<keyword id="KW-1213">G-protein coupled receptor impairing toxin</keyword>
<keyword id="KW-0964">Secreted</keyword>
<keyword id="KW-0732">Signal</keyword>
<keyword id="KW-0800">Toxin</keyword>
<name>VAR2_VARVA</name>